<dbReference type="EC" id="5.4.99.25" evidence="1"/>
<dbReference type="EMBL" id="CP000758">
    <property type="protein sequence ID" value="ABS13467.1"/>
    <property type="molecule type" value="Genomic_DNA"/>
</dbReference>
<dbReference type="RefSeq" id="WP_012090990.1">
    <property type="nucleotide sequence ID" value="NC_009667.1"/>
</dbReference>
<dbReference type="SMR" id="A6WWW3"/>
<dbReference type="STRING" id="439375.Oant_0745"/>
<dbReference type="KEGG" id="oan:Oant_0745"/>
<dbReference type="PATRIC" id="fig|439375.7.peg.787"/>
<dbReference type="eggNOG" id="COG0130">
    <property type="taxonomic scope" value="Bacteria"/>
</dbReference>
<dbReference type="HOGENOM" id="CLU_032087_0_3_5"/>
<dbReference type="PhylomeDB" id="A6WWW3"/>
<dbReference type="Proteomes" id="UP000002301">
    <property type="component" value="Chromosome 1"/>
</dbReference>
<dbReference type="GO" id="GO:0003723">
    <property type="term" value="F:RNA binding"/>
    <property type="evidence" value="ECO:0007669"/>
    <property type="project" value="InterPro"/>
</dbReference>
<dbReference type="GO" id="GO:0160148">
    <property type="term" value="F:tRNA pseudouridine(55) synthase activity"/>
    <property type="evidence" value="ECO:0007669"/>
    <property type="project" value="UniProtKB-EC"/>
</dbReference>
<dbReference type="GO" id="GO:1990481">
    <property type="term" value="P:mRNA pseudouridine synthesis"/>
    <property type="evidence" value="ECO:0007669"/>
    <property type="project" value="TreeGrafter"/>
</dbReference>
<dbReference type="GO" id="GO:0031119">
    <property type="term" value="P:tRNA pseudouridine synthesis"/>
    <property type="evidence" value="ECO:0007669"/>
    <property type="project" value="UniProtKB-UniRule"/>
</dbReference>
<dbReference type="CDD" id="cd02573">
    <property type="entry name" value="PseudoU_synth_EcTruB"/>
    <property type="match status" value="1"/>
</dbReference>
<dbReference type="Gene3D" id="3.30.2350.10">
    <property type="entry name" value="Pseudouridine synthase"/>
    <property type="match status" value="1"/>
</dbReference>
<dbReference type="HAMAP" id="MF_01080">
    <property type="entry name" value="TruB_bact"/>
    <property type="match status" value="1"/>
</dbReference>
<dbReference type="InterPro" id="IPR020103">
    <property type="entry name" value="PsdUridine_synth_cat_dom_sf"/>
</dbReference>
<dbReference type="InterPro" id="IPR002501">
    <property type="entry name" value="PsdUridine_synth_N"/>
</dbReference>
<dbReference type="InterPro" id="IPR014780">
    <property type="entry name" value="tRNA_psdUridine_synth_TruB"/>
</dbReference>
<dbReference type="InterPro" id="IPR015240">
    <property type="entry name" value="tRNA_sdUridine_synth_fam1_C"/>
</dbReference>
<dbReference type="InterPro" id="IPR032819">
    <property type="entry name" value="TruB_C"/>
</dbReference>
<dbReference type="NCBIfam" id="TIGR00431">
    <property type="entry name" value="TruB"/>
    <property type="match status" value="1"/>
</dbReference>
<dbReference type="PANTHER" id="PTHR13767:SF2">
    <property type="entry name" value="PSEUDOURIDYLATE SYNTHASE TRUB1"/>
    <property type="match status" value="1"/>
</dbReference>
<dbReference type="PANTHER" id="PTHR13767">
    <property type="entry name" value="TRNA-PSEUDOURIDINE SYNTHASE"/>
    <property type="match status" value="1"/>
</dbReference>
<dbReference type="Pfam" id="PF09157">
    <property type="entry name" value="TruB-C_2"/>
    <property type="match status" value="1"/>
</dbReference>
<dbReference type="Pfam" id="PF16198">
    <property type="entry name" value="TruB_C_2"/>
    <property type="match status" value="1"/>
</dbReference>
<dbReference type="Pfam" id="PF01509">
    <property type="entry name" value="TruB_N"/>
    <property type="match status" value="1"/>
</dbReference>
<dbReference type="SUPFAM" id="SSF55120">
    <property type="entry name" value="Pseudouridine synthase"/>
    <property type="match status" value="1"/>
</dbReference>
<accession>A6WWW3</accession>
<feature type="chain" id="PRO_1000084631" description="tRNA pseudouridine synthase B">
    <location>
        <begin position="1"/>
        <end position="324"/>
    </location>
</feature>
<feature type="active site" description="Nucleophile" evidence="1">
    <location>
        <position position="49"/>
    </location>
</feature>
<gene>
    <name evidence="1" type="primary">truB</name>
    <name type="ordered locus">Oant_0745</name>
</gene>
<name>TRUB_BRUA4</name>
<reference key="1">
    <citation type="journal article" date="2011" name="J. Bacteriol.">
        <title>Genome of Ochrobactrum anthropi ATCC 49188 T, a versatile opportunistic pathogen and symbiont of several eukaryotic hosts.</title>
        <authorList>
            <person name="Chain P.S."/>
            <person name="Lang D.M."/>
            <person name="Comerci D.J."/>
            <person name="Malfatti S.A."/>
            <person name="Vergez L.M."/>
            <person name="Shin M."/>
            <person name="Ugalde R.A."/>
            <person name="Garcia E."/>
            <person name="Tolmasky M.E."/>
        </authorList>
    </citation>
    <scope>NUCLEOTIDE SEQUENCE [LARGE SCALE GENOMIC DNA]</scope>
    <source>
        <strain>ATCC 49188 / DSM 6882 / CCUG 24695 / JCM 21032 / LMG 3331 / NBRC 15819 / NCTC 12168 / Alc 37</strain>
    </source>
</reference>
<comment type="function">
    <text evidence="1">Responsible for synthesis of pseudouridine from uracil-55 in the psi GC loop of transfer RNAs.</text>
</comment>
<comment type="catalytic activity">
    <reaction evidence="1">
        <text>uridine(55) in tRNA = pseudouridine(55) in tRNA</text>
        <dbReference type="Rhea" id="RHEA:42532"/>
        <dbReference type="Rhea" id="RHEA-COMP:10101"/>
        <dbReference type="Rhea" id="RHEA-COMP:10102"/>
        <dbReference type="ChEBI" id="CHEBI:65314"/>
        <dbReference type="ChEBI" id="CHEBI:65315"/>
        <dbReference type="EC" id="5.4.99.25"/>
    </reaction>
</comment>
<comment type="similarity">
    <text evidence="1">Belongs to the pseudouridine synthase TruB family. Type 1 subfamily.</text>
</comment>
<organism>
    <name type="scientific">Brucella anthropi (strain ATCC 49188 / DSM 6882 / CCUG 24695 / JCM 21032 / LMG 3331 / NBRC 15819 / NCTC 12168 / Alc 37)</name>
    <name type="common">Ochrobactrum anthropi</name>
    <dbReference type="NCBI Taxonomy" id="439375"/>
    <lineage>
        <taxon>Bacteria</taxon>
        <taxon>Pseudomonadati</taxon>
        <taxon>Pseudomonadota</taxon>
        <taxon>Alphaproteobacteria</taxon>
        <taxon>Hyphomicrobiales</taxon>
        <taxon>Brucellaceae</taxon>
        <taxon>Brucella/Ochrobactrum group</taxon>
        <taxon>Brucella</taxon>
    </lineage>
</organism>
<proteinExistence type="inferred from homology"/>
<protein>
    <recommendedName>
        <fullName evidence="1">tRNA pseudouridine synthase B</fullName>
        <ecNumber evidence="1">5.4.99.25</ecNumber>
    </recommendedName>
    <alternativeName>
        <fullName evidence="1">tRNA pseudouridine(55) synthase</fullName>
        <shortName evidence="1">Psi55 synthase</shortName>
    </alternativeName>
    <alternativeName>
        <fullName evidence="1">tRNA pseudouridylate synthase</fullName>
    </alternativeName>
    <alternativeName>
        <fullName evidence="1">tRNA-uridine isomerase</fullName>
    </alternativeName>
</protein>
<keyword id="KW-0413">Isomerase</keyword>
<keyword id="KW-1185">Reference proteome</keyword>
<keyword id="KW-0819">tRNA processing</keyword>
<evidence type="ECO:0000255" key="1">
    <source>
        <dbReference type="HAMAP-Rule" id="MF_01080"/>
    </source>
</evidence>
<sequence>MARRGKKKGRPISGWVIFDKPKGMGSTEAVSKIKWLFNAEKAGHAGTLDPLASGMLPIALGEATKTVPYVMDGTKIYRFTVSWGEERSTDDLEGVATKTSDNRPSRADVEALLPNYTGVISQVPPQFSAIKIDGERAYDLAREGETVEIPSREVEIDRLEIVGIPDADRTEFEVECSKGTYVRSLARDMGRDLGCYGHISELRRIEVAPFTEEDAVTLAELEQAWPPLPPKDEDGNVVEPTPRRDFSAIDALVIDTGAALDCLPQVPLTDDQAQRVRLGNPVILRGRDAPLEADEACVTTRGKLLAIGYIEHGQFKPKRVFTTG</sequence>